<reference key="1">
    <citation type="journal article" date="1994" name="DNA Res.">
        <title>Systematic sequencing of the 180 kilobase region of the Bacillus subtilis chromosome containing the replication origin.</title>
        <authorList>
            <person name="Ogasawara N."/>
            <person name="Nakai S."/>
            <person name="Yoshikawa H."/>
        </authorList>
    </citation>
    <scope>NUCLEOTIDE SEQUENCE [GENOMIC DNA]</scope>
    <source>
        <strain>168</strain>
    </source>
</reference>
<reference key="2">
    <citation type="journal article" date="1997" name="Nature">
        <title>The complete genome sequence of the Gram-positive bacterium Bacillus subtilis.</title>
        <authorList>
            <person name="Kunst F."/>
            <person name="Ogasawara N."/>
            <person name="Moszer I."/>
            <person name="Albertini A.M."/>
            <person name="Alloni G."/>
            <person name="Azevedo V."/>
            <person name="Bertero M.G."/>
            <person name="Bessieres P."/>
            <person name="Bolotin A."/>
            <person name="Borchert S."/>
            <person name="Borriss R."/>
            <person name="Boursier L."/>
            <person name="Brans A."/>
            <person name="Braun M."/>
            <person name="Brignell S.C."/>
            <person name="Bron S."/>
            <person name="Brouillet S."/>
            <person name="Bruschi C.V."/>
            <person name="Caldwell B."/>
            <person name="Capuano V."/>
            <person name="Carter N.M."/>
            <person name="Choi S.-K."/>
            <person name="Codani J.-J."/>
            <person name="Connerton I.F."/>
            <person name="Cummings N.J."/>
            <person name="Daniel R.A."/>
            <person name="Denizot F."/>
            <person name="Devine K.M."/>
            <person name="Duesterhoeft A."/>
            <person name="Ehrlich S.D."/>
            <person name="Emmerson P.T."/>
            <person name="Entian K.-D."/>
            <person name="Errington J."/>
            <person name="Fabret C."/>
            <person name="Ferrari E."/>
            <person name="Foulger D."/>
            <person name="Fritz C."/>
            <person name="Fujita M."/>
            <person name="Fujita Y."/>
            <person name="Fuma S."/>
            <person name="Galizzi A."/>
            <person name="Galleron N."/>
            <person name="Ghim S.-Y."/>
            <person name="Glaser P."/>
            <person name="Goffeau A."/>
            <person name="Golightly E.J."/>
            <person name="Grandi G."/>
            <person name="Guiseppi G."/>
            <person name="Guy B.J."/>
            <person name="Haga K."/>
            <person name="Haiech J."/>
            <person name="Harwood C.R."/>
            <person name="Henaut A."/>
            <person name="Hilbert H."/>
            <person name="Holsappel S."/>
            <person name="Hosono S."/>
            <person name="Hullo M.-F."/>
            <person name="Itaya M."/>
            <person name="Jones L.-M."/>
            <person name="Joris B."/>
            <person name="Karamata D."/>
            <person name="Kasahara Y."/>
            <person name="Klaerr-Blanchard M."/>
            <person name="Klein C."/>
            <person name="Kobayashi Y."/>
            <person name="Koetter P."/>
            <person name="Koningstein G."/>
            <person name="Krogh S."/>
            <person name="Kumano M."/>
            <person name="Kurita K."/>
            <person name="Lapidus A."/>
            <person name="Lardinois S."/>
            <person name="Lauber J."/>
            <person name="Lazarevic V."/>
            <person name="Lee S.-M."/>
            <person name="Levine A."/>
            <person name="Liu H."/>
            <person name="Masuda S."/>
            <person name="Mauel C."/>
            <person name="Medigue C."/>
            <person name="Medina N."/>
            <person name="Mellado R.P."/>
            <person name="Mizuno M."/>
            <person name="Moestl D."/>
            <person name="Nakai S."/>
            <person name="Noback M."/>
            <person name="Noone D."/>
            <person name="O'Reilly M."/>
            <person name="Ogawa K."/>
            <person name="Ogiwara A."/>
            <person name="Oudega B."/>
            <person name="Park S.-H."/>
            <person name="Parro V."/>
            <person name="Pohl T.M."/>
            <person name="Portetelle D."/>
            <person name="Porwollik S."/>
            <person name="Prescott A.M."/>
            <person name="Presecan E."/>
            <person name="Pujic P."/>
            <person name="Purnelle B."/>
            <person name="Rapoport G."/>
            <person name="Rey M."/>
            <person name="Reynolds S."/>
            <person name="Rieger M."/>
            <person name="Rivolta C."/>
            <person name="Rocha E."/>
            <person name="Roche B."/>
            <person name="Rose M."/>
            <person name="Sadaie Y."/>
            <person name="Sato T."/>
            <person name="Scanlan E."/>
            <person name="Schleich S."/>
            <person name="Schroeter R."/>
            <person name="Scoffone F."/>
            <person name="Sekiguchi J."/>
            <person name="Sekowska A."/>
            <person name="Seror S.J."/>
            <person name="Serror P."/>
            <person name="Shin B.-S."/>
            <person name="Soldo B."/>
            <person name="Sorokin A."/>
            <person name="Tacconi E."/>
            <person name="Takagi T."/>
            <person name="Takahashi H."/>
            <person name="Takemaru K."/>
            <person name="Takeuchi M."/>
            <person name="Tamakoshi A."/>
            <person name="Tanaka T."/>
            <person name="Terpstra P."/>
            <person name="Tognoni A."/>
            <person name="Tosato V."/>
            <person name="Uchiyama S."/>
            <person name="Vandenbol M."/>
            <person name="Vannier F."/>
            <person name="Vassarotti A."/>
            <person name="Viari A."/>
            <person name="Wambutt R."/>
            <person name="Wedler E."/>
            <person name="Wedler H."/>
            <person name="Weitzenegger T."/>
            <person name="Winters P."/>
            <person name="Wipat A."/>
            <person name="Yamamoto H."/>
            <person name="Yamane K."/>
            <person name="Yasumoto K."/>
            <person name="Yata K."/>
            <person name="Yoshida K."/>
            <person name="Yoshikawa H.-F."/>
            <person name="Zumstein E."/>
            <person name="Yoshikawa H."/>
            <person name="Danchin A."/>
        </authorList>
    </citation>
    <scope>NUCLEOTIDE SEQUENCE [LARGE SCALE GENOMIC DNA]</scope>
    <source>
        <strain>168</strain>
    </source>
</reference>
<organism>
    <name type="scientific">Bacillus subtilis (strain 168)</name>
    <dbReference type="NCBI Taxonomy" id="224308"/>
    <lineage>
        <taxon>Bacteria</taxon>
        <taxon>Bacillati</taxon>
        <taxon>Bacillota</taxon>
        <taxon>Bacilli</taxon>
        <taxon>Bacillales</taxon>
        <taxon>Bacillaceae</taxon>
        <taxon>Bacillus</taxon>
    </lineage>
</organism>
<protein>
    <recommendedName>
        <fullName>Uncharacterized protein YaaR</fullName>
    </recommendedName>
</protein>
<gene>
    <name type="primary">yaaR</name>
    <name type="ordered locus">BSU00300</name>
</gene>
<feature type="chain" id="PRO_0000049436" description="Uncharacterized protein YaaR">
    <location>
        <begin position="1"/>
        <end position="146"/>
    </location>
</feature>
<proteinExistence type="predicted"/>
<accession>P37539</accession>
<name>YAAR_BACSU</name>
<dbReference type="EMBL" id="D26185">
    <property type="protein sequence ID" value="BAA05266.1"/>
    <property type="molecule type" value="Genomic_DNA"/>
</dbReference>
<dbReference type="EMBL" id="AL009126">
    <property type="protein sequence ID" value="CAB11806.1"/>
    <property type="molecule type" value="Genomic_DNA"/>
</dbReference>
<dbReference type="PIR" id="S66060">
    <property type="entry name" value="S66060"/>
</dbReference>
<dbReference type="RefSeq" id="NP_387911.1">
    <property type="nucleotide sequence ID" value="NC_000964.3"/>
</dbReference>
<dbReference type="RefSeq" id="WP_009966249.1">
    <property type="nucleotide sequence ID" value="NZ_OZ025638.1"/>
</dbReference>
<dbReference type="SMR" id="P37539"/>
<dbReference type="FunCoup" id="P37539">
    <property type="interactions" value="22"/>
</dbReference>
<dbReference type="STRING" id="224308.BSU00300"/>
<dbReference type="PaxDb" id="224308-BSU00300"/>
<dbReference type="EnsemblBacteria" id="CAB11806">
    <property type="protein sequence ID" value="CAB11806"/>
    <property type="gene ID" value="BSU_00300"/>
</dbReference>
<dbReference type="GeneID" id="936756"/>
<dbReference type="KEGG" id="bsu:BSU00300"/>
<dbReference type="PATRIC" id="fig|224308.179.peg.30"/>
<dbReference type="eggNOG" id="COG1728">
    <property type="taxonomic scope" value="Bacteria"/>
</dbReference>
<dbReference type="InParanoid" id="P37539"/>
<dbReference type="OrthoDB" id="1680946at2"/>
<dbReference type="PhylomeDB" id="P37539"/>
<dbReference type="BioCyc" id="BSUB:BSU00300-MONOMER"/>
<dbReference type="Proteomes" id="UP000001570">
    <property type="component" value="Chromosome"/>
</dbReference>
<dbReference type="Gene3D" id="1.20.120.490">
    <property type="entry name" value="Hypothetical protein TM1646-like domain"/>
    <property type="match status" value="1"/>
</dbReference>
<dbReference type="InterPro" id="IPR005585">
    <property type="entry name" value="DUF327"/>
</dbReference>
<dbReference type="InterPro" id="IPR024042">
    <property type="entry name" value="TM1646-like_dom_sf"/>
</dbReference>
<dbReference type="Pfam" id="PF03885">
    <property type="entry name" value="DUF327"/>
    <property type="match status" value="1"/>
</dbReference>
<dbReference type="SUPFAM" id="SSF158397">
    <property type="entry name" value="TM1646-like"/>
    <property type="match status" value="1"/>
</dbReference>
<sequence>MKINKDIRTFIDNKQIPSVKTSEITASFKTSMENQSSKMKLDQLTRLLSDIEAFGKRLTKSRNFKDLARFKGLVKRFVKEAVDSGLSHETSKSFDLYGNSRTLGLVKEIDDKLIQLTEEMMDQEKPAIDLLERIGEIKGLLINLYT</sequence>
<keyword id="KW-1185">Reference proteome</keyword>